<organism>
    <name type="scientific">Xenopus laevis</name>
    <name type="common">African clawed frog</name>
    <dbReference type="NCBI Taxonomy" id="8355"/>
    <lineage>
        <taxon>Eukaryota</taxon>
        <taxon>Metazoa</taxon>
        <taxon>Chordata</taxon>
        <taxon>Craniata</taxon>
        <taxon>Vertebrata</taxon>
        <taxon>Euteleostomi</taxon>
        <taxon>Amphibia</taxon>
        <taxon>Batrachia</taxon>
        <taxon>Anura</taxon>
        <taxon>Pipoidea</taxon>
        <taxon>Pipidae</taxon>
        <taxon>Xenopodinae</taxon>
        <taxon>Xenopus</taxon>
        <taxon>Xenopus</taxon>
    </lineage>
</organism>
<sequence length="121" mass="13938">MEPNQQRSCGSSSDSSATGTPQGSNVAVWRPWHDAPRTHVQNPPTAQQQFYSDNQSHMNDKGKPPSFQHPVKLFWPKSRCYDFMYQEAEELLRHFPVQATISLYQETDSDSDSEEEDIYEN</sequence>
<accession>Q8QGU6</accession>
<proteinExistence type="evidence at transcript level"/>
<comment type="function">
    <text evidence="4 5">Required during somitogenesis to regulate somite differentiation and the positioning of the presomitic mesoderm-front. Represses the expression of genes involved in somite segmentation by acting with the corepressor tle4 to down-regulate the transcriptional activity of tbx6. Also regulates retinoic acid signaling during somitogenesis and is necessary for the expression of aldh1a2/raldh2.</text>
</comment>
<comment type="subcellular location">
    <subcellularLocation>
        <location evidence="4">Nucleus</location>
    </subcellularLocation>
</comment>
<comment type="tissue specificity">
    <text evidence="4 5">Expressed in the presomitic mesoderm (PSM) in the anterior halves of somitomeres S-0, S-I and S-II and in the newly formed somites.</text>
</comment>
<comment type="developmental stage">
    <text evidence="4">Expressed from stage 12.</text>
</comment>
<comment type="induction">
    <text evidence="4 5">By notch signaling. By tbx6 together with thy1 and tcf3.</text>
</comment>
<comment type="domain">
    <text evidence="1">The ripply homology domain is required for transcriptional repression.</text>
</comment>
<comment type="domain">
    <text evidence="1">The WRPW motif is required for binding to tle/groucho proteins and transcriptional repression.</text>
</comment>
<comment type="similarity">
    <text evidence="1">Belongs to the ripply family.</text>
</comment>
<feature type="chain" id="PRO_0000308375" description="Protein ripply2.1">
    <location>
        <begin position="1"/>
        <end position="121"/>
    </location>
</feature>
<feature type="region of interest" description="Disordered" evidence="3">
    <location>
        <begin position="1"/>
        <end position="69"/>
    </location>
</feature>
<feature type="region of interest" description="Ripply homology domain" evidence="2">
    <location>
        <begin position="69"/>
        <end position="104"/>
    </location>
</feature>
<feature type="short sequence motif" description="WRPW motif" evidence="2">
    <location>
        <begin position="29"/>
        <end position="32"/>
    </location>
</feature>
<feature type="compositionally biased region" description="Polar residues" evidence="3">
    <location>
        <begin position="39"/>
        <end position="57"/>
    </location>
</feature>
<keyword id="KW-0217">Developmental protein</keyword>
<keyword id="KW-0539">Nucleus</keyword>
<keyword id="KW-1185">Reference proteome</keyword>
<keyword id="KW-0678">Repressor</keyword>
<keyword id="KW-0804">Transcription</keyword>
<keyword id="KW-0805">Transcription regulation</keyword>
<evidence type="ECO:0000250" key="1">
    <source>
        <dbReference type="UniProtKB" id="Q25QX6"/>
    </source>
</evidence>
<evidence type="ECO:0000255" key="2"/>
<evidence type="ECO:0000256" key="3">
    <source>
        <dbReference type="SAM" id="MobiDB-lite"/>
    </source>
</evidence>
<evidence type="ECO:0000269" key="4">
    <source>
    </source>
</evidence>
<evidence type="ECO:0000269" key="5">
    <source>
    </source>
</evidence>
<evidence type="ECO:0000305" key="6"/>
<evidence type="ECO:0000312" key="7">
    <source>
        <dbReference type="EMBL" id="BAB90857.1"/>
    </source>
</evidence>
<dbReference type="EMBL" id="AB073615">
    <property type="protein sequence ID" value="BAB90857.1"/>
    <property type="molecule type" value="mRNA"/>
</dbReference>
<dbReference type="RefSeq" id="NP_001082224.1">
    <property type="nucleotide sequence ID" value="NM_001088755.1"/>
</dbReference>
<dbReference type="GeneID" id="398303"/>
<dbReference type="KEGG" id="xla:398303"/>
<dbReference type="AGR" id="Xenbase:XB-GENE-6251611"/>
<dbReference type="CTD" id="398303"/>
<dbReference type="Xenbase" id="XB-GENE-6251611">
    <property type="gene designation" value="ripply2.S"/>
</dbReference>
<dbReference type="OrthoDB" id="5978888at2759"/>
<dbReference type="Proteomes" id="UP000186698">
    <property type="component" value="Chromosome 5S"/>
</dbReference>
<dbReference type="Bgee" id="398303">
    <property type="expression patterns" value="Expressed in testis and 6 other cell types or tissues"/>
</dbReference>
<dbReference type="GO" id="GO:0005634">
    <property type="term" value="C:nucleus"/>
    <property type="evidence" value="ECO:0000318"/>
    <property type="project" value="GO_Central"/>
</dbReference>
<dbReference type="GO" id="GO:0009880">
    <property type="term" value="P:embryonic pattern specification"/>
    <property type="evidence" value="ECO:0000318"/>
    <property type="project" value="GO_Central"/>
</dbReference>
<dbReference type="GO" id="GO:0043433">
    <property type="term" value="P:negative regulation of DNA-binding transcription factor activity"/>
    <property type="evidence" value="ECO:0000314"/>
    <property type="project" value="UniProtKB"/>
</dbReference>
<dbReference type="GO" id="GO:0045892">
    <property type="term" value="P:negative regulation of DNA-templated transcription"/>
    <property type="evidence" value="ECO:0000314"/>
    <property type="project" value="UniProtKB"/>
</dbReference>
<dbReference type="GO" id="GO:0000122">
    <property type="term" value="P:negative regulation of transcription by RNA polymerase II"/>
    <property type="evidence" value="ECO:0000314"/>
    <property type="project" value="UniProtKB"/>
</dbReference>
<dbReference type="GO" id="GO:0001756">
    <property type="term" value="P:somitogenesis"/>
    <property type="evidence" value="ECO:0000315"/>
    <property type="project" value="UniProtKB"/>
</dbReference>
<dbReference type="InterPro" id="IPR028127">
    <property type="entry name" value="Ripply_fam"/>
</dbReference>
<dbReference type="PANTHER" id="PTHR16770">
    <property type="entry name" value="PROTEIN RIPPLY-LIKE"/>
    <property type="match status" value="1"/>
</dbReference>
<dbReference type="PANTHER" id="PTHR16770:SF3">
    <property type="entry name" value="PROTEIN RIPPLY2"/>
    <property type="match status" value="1"/>
</dbReference>
<dbReference type="Pfam" id="PF14998">
    <property type="entry name" value="Ripply"/>
    <property type="match status" value="1"/>
</dbReference>
<gene>
    <name type="primary">ripply2.1</name>
    <name type="synonym">ledgerline</name>
</gene>
<protein>
    <recommendedName>
        <fullName>Protein ripply2.1</fullName>
    </recommendedName>
    <alternativeName>
        <fullName>Protein ledgerline</fullName>
    </alternativeName>
</protein>
<name>LEDGE_XENLA</name>
<reference evidence="6 7" key="1">
    <citation type="journal article" date="2006" name="Zool. Sci.">
        <title>Ledgerline, a novel Xenopus laevis gene, regulates differentiation of presomitic mesoderm during somitogenesis.</title>
        <authorList>
            <person name="Chan T."/>
            <person name="Satow R."/>
            <person name="Kitagawa H."/>
            <person name="Kato S."/>
            <person name="Asashima M."/>
        </authorList>
    </citation>
    <scope>NUCLEOTIDE SEQUENCE [MRNA]</scope>
    <scope>FUNCTION</scope>
    <scope>SUBCELLULAR LOCATION</scope>
    <scope>TISSUE SPECIFICITY</scope>
    <scope>DEVELOPMENTAL STAGE</scope>
    <scope>INDUCTION</scope>
</reference>
<reference key="2">
    <citation type="journal article" date="2009" name="Int. J. Dev. Biol.">
        <title>The Xenopus Bowline/Ripply family proteins negatively regulate the transcriptional activity of T-box transcription factors.</title>
        <authorList>
            <person name="Hitachi K."/>
            <person name="Danno H."/>
            <person name="Tazumi S."/>
            <person name="Aihara Y."/>
            <person name="Uchiyama H."/>
            <person name="Okabayashi K."/>
            <person name="Kondow A."/>
            <person name="Asashima M."/>
        </authorList>
    </citation>
    <scope>FUNCTION</scope>
    <scope>TISSUE SPECIFICITY</scope>
    <scope>INDUCTION</scope>
</reference>